<proteinExistence type="evidence at protein level"/>
<reference evidence="5 6" key="1">
    <citation type="journal article" date="2008" name="Phytochemistry">
        <title>The alpine violet, Viola biflora, is a rich source of cyclotides with potent cytotoxicity.</title>
        <authorList>
            <person name="Herrmann A."/>
            <person name="Burman R."/>
            <person name="Mylne J.S."/>
            <person name="Karlsson G."/>
            <person name="Gullbo J."/>
            <person name="Craik D.J."/>
            <person name="Clark R.J."/>
            <person name="Goeransson U."/>
        </authorList>
    </citation>
    <scope>NUCLEOTIDE SEQUENCE [MRNA]</scope>
    <scope>MASS SPECTROMETRY</scope>
    <source>
        <tissue evidence="4">Leaf</tissue>
    </source>
</reference>
<protein>
    <recommendedName>
        <fullName>Cyclotide vitri-A</fullName>
    </recommendedName>
    <alternativeName>
        <fullName>Vbc6</fullName>
    </alternativeName>
</protein>
<comment type="function">
    <text evidence="5">Probably participates in a plant defense mechanism.</text>
</comment>
<comment type="domain">
    <text evidence="1">The presence of a 'disulfide through disulfide knot' structurally defines this protein as a knottin.</text>
</comment>
<comment type="PTM">
    <text evidence="5">This is a cyclic peptide.</text>
</comment>
<comment type="mass spectrometry"/>
<comment type="similarity">
    <text evidence="3">Belongs to the cyclotide family. Bracelet subfamily.</text>
</comment>
<evidence type="ECO:0000250" key="1">
    <source>
        <dbReference type="UniProtKB" id="P56871"/>
    </source>
</evidence>
<evidence type="ECO:0000250" key="2">
    <source>
        <dbReference type="UniProtKB" id="Q5USN8"/>
    </source>
</evidence>
<evidence type="ECO:0000255" key="3">
    <source>
        <dbReference type="PROSITE-ProRule" id="PRU00395"/>
    </source>
</evidence>
<evidence type="ECO:0000269" key="4">
    <source>
    </source>
</evidence>
<evidence type="ECO:0000305" key="5"/>
<evidence type="ECO:0000312" key="6">
    <source>
        <dbReference type="EMBL" id="ABW08095.1"/>
    </source>
</evidence>
<organism>
    <name type="scientific">Viola biflora</name>
    <name type="common">Yellow wood violet</name>
    <dbReference type="NCBI Taxonomy" id="214529"/>
    <lineage>
        <taxon>Eukaryota</taxon>
        <taxon>Viridiplantae</taxon>
        <taxon>Streptophyta</taxon>
        <taxon>Embryophyta</taxon>
        <taxon>Tracheophyta</taxon>
        <taxon>Spermatophyta</taxon>
        <taxon>Magnoliopsida</taxon>
        <taxon>eudicotyledons</taxon>
        <taxon>Gunneridae</taxon>
        <taxon>Pentapetalae</taxon>
        <taxon>rosids</taxon>
        <taxon>fabids</taxon>
        <taxon>Malpighiales</taxon>
        <taxon>Violaceae</taxon>
        <taxon>Viola</taxon>
        <taxon>Viola subgen. Viola</taxon>
        <taxon>Viola sect. Chamaemelanium</taxon>
    </lineage>
</organism>
<accession>B1NRR3</accession>
<name>VITA_VIOBI</name>
<keyword id="KW-1015">Disulfide bond</keyword>
<keyword id="KW-0960">Knottin</keyword>
<keyword id="KW-0611">Plant defense</keyword>
<keyword id="KW-0732">Signal</keyword>
<feature type="signal peptide" evidence="2">
    <location>
        <begin position="1" status="less than"/>
        <end position="9"/>
    </location>
</feature>
<feature type="propeptide" id="PRO_0000341445" evidence="2">
    <location>
        <begin position="10"/>
        <end position="69"/>
    </location>
</feature>
<feature type="peptide" id="PRO_0000341446" description="Cyclotide vitri-A" evidence="3">
    <location>
        <begin position="70"/>
        <end position="99"/>
    </location>
</feature>
<feature type="propeptide" id="PRO_0000341447" evidence="2">
    <location>
        <begin position="100"/>
        <end position="103"/>
    </location>
</feature>
<feature type="disulfide bond" evidence="1 3">
    <location>
        <begin position="73"/>
        <end position="89"/>
    </location>
</feature>
<feature type="disulfide bond" evidence="1 3">
    <location>
        <begin position="77"/>
        <end position="91"/>
    </location>
</feature>
<feature type="disulfide bond" evidence="1 3">
    <location>
        <begin position="82"/>
        <end position="96"/>
    </location>
</feature>
<feature type="cross-link" description="Cyclopeptide (Gly-Asn)" evidence="2">
    <location>
        <begin position="70"/>
        <end position="99"/>
    </location>
</feature>
<feature type="non-terminal residue" evidence="6">
    <location>
        <position position="1"/>
    </location>
</feature>
<dbReference type="EMBL" id="EU046623">
    <property type="protein sequence ID" value="ABW08095.1"/>
    <property type="molecule type" value="mRNA"/>
</dbReference>
<dbReference type="SMR" id="B1NRR3"/>
<dbReference type="GO" id="GO:0006952">
    <property type="term" value="P:defense response"/>
    <property type="evidence" value="ECO:0007669"/>
    <property type="project" value="UniProtKB-KW"/>
</dbReference>
<dbReference type="InterPro" id="IPR005535">
    <property type="entry name" value="Cyclotide"/>
</dbReference>
<dbReference type="InterPro" id="IPR012323">
    <property type="entry name" value="Cyclotide_bracelet_CS"/>
</dbReference>
<dbReference type="InterPro" id="IPR036146">
    <property type="entry name" value="Cyclotide_sf"/>
</dbReference>
<dbReference type="Pfam" id="PF03784">
    <property type="entry name" value="Cyclotide"/>
    <property type="match status" value="1"/>
</dbReference>
<dbReference type="SUPFAM" id="SSF57038">
    <property type="entry name" value="Cyclotides"/>
    <property type="match status" value="1"/>
</dbReference>
<dbReference type="PROSITE" id="PS51052">
    <property type="entry name" value="CYCLOTIDE"/>
    <property type="match status" value="1"/>
</dbReference>
<dbReference type="PROSITE" id="PS60008">
    <property type="entry name" value="CYCLOTIDE_BRACELET"/>
    <property type="match status" value="1"/>
</dbReference>
<sequence>AAFALPAFASFEKDVITPAALEAVLNRKAPLSNIMMENDAIVNVIANVKTVISNPVLEEALLKTNHGVNGIPCGESCVWIPCITSAIGCSCKSKVCYRNSLDN</sequence>